<reference key="1">
    <citation type="submission" date="2009-05" db="EMBL/GenBank/DDBJ databases">
        <title>Expression profiles of karyopherin alpha molecules in porcine oocytes and embryos produced by in vitro fertilization.</title>
        <authorList>
            <person name="Wang X."/>
            <person name="Cabot R."/>
        </authorList>
    </citation>
    <scope>NUCLEOTIDE SEQUENCE [MRNA]</scope>
</reference>
<reference key="2">
    <citation type="submission" date="2009-11" db="EMBL/GenBank/DDBJ databases">
        <authorList>
            <consortium name="Swine Genome Sequencing Consortium"/>
        </authorList>
    </citation>
    <scope>NUCLEOTIDE SEQUENCE [LARGE SCALE GENOMIC DNA]</scope>
</reference>
<organism>
    <name type="scientific">Sus scrofa</name>
    <name type="common">Pig</name>
    <dbReference type="NCBI Taxonomy" id="9823"/>
    <lineage>
        <taxon>Eukaryota</taxon>
        <taxon>Metazoa</taxon>
        <taxon>Chordata</taxon>
        <taxon>Craniata</taxon>
        <taxon>Vertebrata</taxon>
        <taxon>Euteleostomi</taxon>
        <taxon>Mammalia</taxon>
        <taxon>Eutheria</taxon>
        <taxon>Laurasiatheria</taxon>
        <taxon>Artiodactyla</taxon>
        <taxon>Suina</taxon>
        <taxon>Suidae</taxon>
        <taxon>Sus</taxon>
    </lineage>
</organism>
<gene>
    <name type="primary">KPNA7</name>
</gene>
<feature type="chain" id="PRO_0000413538" description="Importin subunit alpha-8">
    <location>
        <begin position="1"/>
        <end position="507"/>
    </location>
</feature>
<feature type="domain" description="IBB" evidence="2">
    <location>
        <begin position="1"/>
        <end position="57"/>
    </location>
</feature>
<feature type="repeat" description="ARM 1">
    <location>
        <begin position="99"/>
        <end position="139"/>
    </location>
</feature>
<feature type="repeat" description="ARM 2">
    <location>
        <begin position="142"/>
        <end position="181"/>
    </location>
</feature>
<feature type="repeat" description="ARM 3">
    <location>
        <begin position="184"/>
        <end position="224"/>
    </location>
</feature>
<feature type="repeat" description="ARM 4">
    <location>
        <begin position="227"/>
        <end position="266"/>
    </location>
</feature>
<feature type="repeat" description="ARM 5">
    <location>
        <begin position="269"/>
        <end position="308"/>
    </location>
</feature>
<feature type="repeat" description="ARM 6">
    <location>
        <begin position="311"/>
        <end position="350"/>
    </location>
</feature>
<feature type="repeat" description="ARM 7">
    <location>
        <begin position="353"/>
        <end position="392"/>
    </location>
</feature>
<feature type="repeat" description="ARM 8">
    <location>
        <begin position="396"/>
        <end position="435"/>
    </location>
</feature>
<feature type="sequence conflict" description="In Ref. 1; ACS34962." evidence="3" ref="1">
    <original>R</original>
    <variation>H</variation>
    <location>
        <position position="146"/>
    </location>
</feature>
<feature type="sequence conflict" description="In Ref. 1; ACS34962." evidence="3" ref="1">
    <original>R</original>
    <variation>C</variation>
    <location>
        <position position="301"/>
    </location>
</feature>
<feature type="sequence conflict" description="In Ref. 1; ACS34962." evidence="3" ref="1">
    <original>A</original>
    <variation>T</variation>
    <location>
        <position position="383"/>
    </location>
</feature>
<protein>
    <recommendedName>
        <fullName>Importin subunit alpha-8</fullName>
    </recommendedName>
    <alternativeName>
        <fullName>Karyopherin subunit alpha-7</fullName>
    </alternativeName>
</protein>
<sequence>MPILEAPEERLRKFKYRGKDASVRRQQRLAVSLELRKAKKDEQALKRRNITTASDPFVQQTNGAKLTLQEIIHGVNASDPEQCFQATQAARKMLSQERNPPLKLMVEAGLIPRLVQLLRSSLHPCLQFEAAWALTNIASGASELTRAVVEGGAIQPLVELLASSHMSVCEQAVWALGNIAGDGAEFRDIVISSNAIPHLLALASSNVPVTFLRNIVWTLSNLCRNKNPCPCDNAVKQMLPVLSHLLQHRDSEVLSDTCWALSYLTDGCDERIGQVVDMGVLPRLVELMTSSELNVLTPSLRTVGNIVTGTDPQTQLAIDAGLLSVLPHLLLHPRSSIQKEAAWALSNVAAGPHQHIQQLIACGALPPLVALLKNGEFKVQKEAVWTVANFTTGGTVDQLVQLVQAGVLEPLINLLDIQDTKMVIIILDVIFFILQAAEKISQKENMCLLIEGLGGIDKIEALQLHENRQVALTALSIIERYFSEEEDAGTLSALLQDHECLTPLTKT</sequence>
<comment type="function">
    <text evidence="1">Functions in nuclear protein import.</text>
</comment>
<comment type="subunit">
    <text evidence="1">Binds to importin subunit beta-1/KPNB1 via the IBB domain; this complex dissociates in the presence of RAN-GTP. Shows a limited binding to the RB1 nuclear localization signal (NLS), but not to the SV40, nor NPM1 NLSs. Interacts with RSL1D1.</text>
</comment>
<comment type="subcellular location">
    <subcellularLocation>
        <location evidence="1">Nucleus</location>
    </subcellularLocation>
</comment>
<comment type="similarity">
    <text evidence="3">Belongs to the importin alpha family.</text>
</comment>
<proteinExistence type="evidence at transcript level"/>
<name>IMA8_PIG</name>
<dbReference type="EMBL" id="GQ166958">
    <property type="protein sequence ID" value="ACS34962.1"/>
    <property type="molecule type" value="mRNA"/>
</dbReference>
<dbReference type="EMBL" id="FP102574">
    <property type="status" value="NOT_ANNOTATED_CDS"/>
    <property type="molecule type" value="Genomic_DNA"/>
</dbReference>
<dbReference type="RefSeq" id="NP_001156883.1">
    <property type="nucleotide sequence ID" value="NM_001163411.1"/>
</dbReference>
<dbReference type="SMR" id="C6K7I2"/>
<dbReference type="FunCoup" id="C6K7I2">
    <property type="interactions" value="55"/>
</dbReference>
<dbReference type="STRING" id="9823.ENSSSCP00000008128"/>
<dbReference type="PaxDb" id="9823-ENSSSCP00000008128"/>
<dbReference type="GeneID" id="100302505"/>
<dbReference type="KEGG" id="ssc:100302505"/>
<dbReference type="CTD" id="402569"/>
<dbReference type="eggNOG" id="KOG0166">
    <property type="taxonomic scope" value="Eukaryota"/>
</dbReference>
<dbReference type="InParanoid" id="C6K7I2"/>
<dbReference type="OrthoDB" id="29145at2759"/>
<dbReference type="ChiTaRS" id="KPNA7">
    <property type="organism name" value="pig"/>
</dbReference>
<dbReference type="Proteomes" id="UP000008227">
    <property type="component" value="Unplaced"/>
</dbReference>
<dbReference type="Proteomes" id="UP000314985">
    <property type="component" value="Unplaced"/>
</dbReference>
<dbReference type="Proteomes" id="UP000694570">
    <property type="component" value="Unplaced"/>
</dbReference>
<dbReference type="Proteomes" id="UP000694571">
    <property type="component" value="Unplaced"/>
</dbReference>
<dbReference type="Proteomes" id="UP000694720">
    <property type="component" value="Unplaced"/>
</dbReference>
<dbReference type="Proteomes" id="UP000694722">
    <property type="component" value="Unplaced"/>
</dbReference>
<dbReference type="Proteomes" id="UP000694723">
    <property type="component" value="Unplaced"/>
</dbReference>
<dbReference type="Proteomes" id="UP000694724">
    <property type="component" value="Unplaced"/>
</dbReference>
<dbReference type="Proteomes" id="UP000694725">
    <property type="component" value="Unplaced"/>
</dbReference>
<dbReference type="Proteomes" id="UP000694726">
    <property type="component" value="Unplaced"/>
</dbReference>
<dbReference type="Proteomes" id="UP000694727">
    <property type="component" value="Unplaced"/>
</dbReference>
<dbReference type="Proteomes" id="UP000694728">
    <property type="component" value="Unplaced"/>
</dbReference>
<dbReference type="GO" id="GO:0005737">
    <property type="term" value="C:cytoplasm"/>
    <property type="evidence" value="ECO:0007669"/>
    <property type="project" value="InterPro"/>
</dbReference>
<dbReference type="GO" id="GO:0005634">
    <property type="term" value="C:nucleus"/>
    <property type="evidence" value="ECO:0000318"/>
    <property type="project" value="GO_Central"/>
</dbReference>
<dbReference type="GO" id="GO:0061608">
    <property type="term" value="F:nuclear import signal receptor activity"/>
    <property type="evidence" value="ECO:0000318"/>
    <property type="project" value="GO_Central"/>
</dbReference>
<dbReference type="GO" id="GO:0008139">
    <property type="term" value="F:nuclear localization sequence binding"/>
    <property type="evidence" value="ECO:0000318"/>
    <property type="project" value="GO_Central"/>
</dbReference>
<dbReference type="GO" id="GO:0006607">
    <property type="term" value="P:NLS-bearing protein import into nucleus"/>
    <property type="evidence" value="ECO:0000318"/>
    <property type="project" value="GO_Central"/>
</dbReference>
<dbReference type="FunFam" id="1.25.10.10:FF:000009">
    <property type="entry name" value="Importin subunit alpha"/>
    <property type="match status" value="1"/>
</dbReference>
<dbReference type="Gene3D" id="1.20.5.690">
    <property type="entry name" value="Importin-alpha, importin-beta-binding domain"/>
    <property type="match status" value="1"/>
</dbReference>
<dbReference type="Gene3D" id="1.25.10.10">
    <property type="entry name" value="Leucine-rich Repeat Variant"/>
    <property type="match status" value="1"/>
</dbReference>
<dbReference type="InterPro" id="IPR011989">
    <property type="entry name" value="ARM-like"/>
</dbReference>
<dbReference type="InterPro" id="IPR016024">
    <property type="entry name" value="ARM-type_fold"/>
</dbReference>
<dbReference type="InterPro" id="IPR032413">
    <property type="entry name" value="Arm_3"/>
</dbReference>
<dbReference type="InterPro" id="IPR000225">
    <property type="entry name" value="Armadillo"/>
</dbReference>
<dbReference type="InterPro" id="IPR002652">
    <property type="entry name" value="Importin-a_IBB"/>
</dbReference>
<dbReference type="InterPro" id="IPR036975">
    <property type="entry name" value="Importin-a_IBB_sf"/>
</dbReference>
<dbReference type="InterPro" id="IPR024931">
    <property type="entry name" value="Importin_alpha"/>
</dbReference>
<dbReference type="PANTHER" id="PTHR23316">
    <property type="entry name" value="IMPORTIN ALPHA"/>
    <property type="match status" value="1"/>
</dbReference>
<dbReference type="Pfam" id="PF00514">
    <property type="entry name" value="Arm"/>
    <property type="match status" value="7"/>
</dbReference>
<dbReference type="Pfam" id="PF16186">
    <property type="entry name" value="Arm_3"/>
    <property type="match status" value="1"/>
</dbReference>
<dbReference type="Pfam" id="PF01749">
    <property type="entry name" value="IBB"/>
    <property type="match status" value="1"/>
</dbReference>
<dbReference type="PIRSF" id="PIRSF005673">
    <property type="entry name" value="Importin_alpha"/>
    <property type="match status" value="1"/>
</dbReference>
<dbReference type="SMART" id="SM00185">
    <property type="entry name" value="ARM"/>
    <property type="match status" value="8"/>
</dbReference>
<dbReference type="SUPFAM" id="SSF48371">
    <property type="entry name" value="ARM repeat"/>
    <property type="match status" value="1"/>
</dbReference>
<dbReference type="PROSITE" id="PS50176">
    <property type="entry name" value="ARM_REPEAT"/>
    <property type="match status" value="4"/>
</dbReference>
<dbReference type="PROSITE" id="PS51214">
    <property type="entry name" value="IBB"/>
    <property type="match status" value="1"/>
</dbReference>
<keyword id="KW-0539">Nucleus</keyword>
<keyword id="KW-0653">Protein transport</keyword>
<keyword id="KW-1185">Reference proteome</keyword>
<keyword id="KW-0677">Repeat</keyword>
<keyword id="KW-0813">Transport</keyword>
<evidence type="ECO:0000250" key="1">
    <source>
        <dbReference type="UniProtKB" id="A9QM74"/>
    </source>
</evidence>
<evidence type="ECO:0000255" key="2">
    <source>
        <dbReference type="PROSITE-ProRule" id="PRU00561"/>
    </source>
</evidence>
<evidence type="ECO:0000305" key="3"/>
<accession>C6K7I2</accession>
<accession>F1RFK2</accession>